<dbReference type="EMBL" id="BX248357">
    <property type="protein sequence ID" value="CAE49777.1"/>
    <property type="molecule type" value="Genomic_DNA"/>
</dbReference>
<dbReference type="RefSeq" id="WP_010934926.1">
    <property type="nucleotide sequence ID" value="NC_002935.2"/>
</dbReference>
<dbReference type="SMR" id="Q6NH92"/>
<dbReference type="STRING" id="257309.DIP1248"/>
<dbReference type="DNASU" id="2649803"/>
<dbReference type="KEGG" id="cdi:DIP1248"/>
<dbReference type="HOGENOM" id="CLU_036054_0_0_11"/>
<dbReference type="Proteomes" id="UP000002198">
    <property type="component" value="Chromosome"/>
</dbReference>
<dbReference type="GO" id="GO:0000502">
    <property type="term" value="C:proteasome complex"/>
    <property type="evidence" value="ECO:0007669"/>
    <property type="project" value="InterPro"/>
</dbReference>
<dbReference type="GO" id="GO:0005524">
    <property type="term" value="F:ATP binding"/>
    <property type="evidence" value="ECO:0007669"/>
    <property type="project" value="UniProtKB-UniRule"/>
</dbReference>
<dbReference type="GO" id="GO:0016887">
    <property type="term" value="F:ATP hydrolysis activity"/>
    <property type="evidence" value="ECO:0007669"/>
    <property type="project" value="UniProtKB-UniRule"/>
</dbReference>
<dbReference type="GO" id="GO:0019941">
    <property type="term" value="P:modification-dependent protein catabolic process"/>
    <property type="evidence" value="ECO:0007669"/>
    <property type="project" value="InterPro"/>
</dbReference>
<dbReference type="GO" id="GO:0010498">
    <property type="term" value="P:proteasomal protein catabolic process"/>
    <property type="evidence" value="ECO:0007669"/>
    <property type="project" value="InterPro"/>
</dbReference>
<dbReference type="FunFam" id="3.40.50.300:FF:001025">
    <property type="entry name" value="ATPase family, AAA domain-containing 2B"/>
    <property type="match status" value="1"/>
</dbReference>
<dbReference type="Gene3D" id="1.10.8.60">
    <property type="match status" value="1"/>
</dbReference>
<dbReference type="Gene3D" id="1.20.5.170">
    <property type="match status" value="1"/>
</dbReference>
<dbReference type="Gene3D" id="2.40.50.140">
    <property type="entry name" value="Nucleic acid-binding proteins"/>
    <property type="match status" value="2"/>
</dbReference>
<dbReference type="Gene3D" id="3.40.50.300">
    <property type="entry name" value="P-loop containing nucleotide triphosphate hydrolases"/>
    <property type="match status" value="1"/>
</dbReference>
<dbReference type="HAMAP" id="MF_02112">
    <property type="entry name" value="ARC_ATPase"/>
    <property type="match status" value="1"/>
</dbReference>
<dbReference type="InterPro" id="IPR003593">
    <property type="entry name" value="AAA+_ATPase"/>
</dbReference>
<dbReference type="InterPro" id="IPR050168">
    <property type="entry name" value="AAA_ATPase_domain"/>
</dbReference>
<dbReference type="InterPro" id="IPR003959">
    <property type="entry name" value="ATPase_AAA_core"/>
</dbReference>
<dbReference type="InterPro" id="IPR003960">
    <property type="entry name" value="ATPase_AAA_CS"/>
</dbReference>
<dbReference type="InterPro" id="IPR012340">
    <property type="entry name" value="NA-bd_OB-fold"/>
</dbReference>
<dbReference type="InterPro" id="IPR027417">
    <property type="entry name" value="P-loop_NTPase"/>
</dbReference>
<dbReference type="InterPro" id="IPR032501">
    <property type="entry name" value="Prot_ATP_ID_OB_2nd"/>
</dbReference>
<dbReference type="InterPro" id="IPR041626">
    <property type="entry name" value="Prot_ATP_ID_OB_N"/>
</dbReference>
<dbReference type="InterPro" id="IPR022482">
    <property type="entry name" value="Proteasome_ATPase"/>
</dbReference>
<dbReference type="NCBIfam" id="TIGR03689">
    <property type="entry name" value="pup_AAA"/>
    <property type="match status" value="1"/>
</dbReference>
<dbReference type="PANTHER" id="PTHR23077">
    <property type="entry name" value="AAA-FAMILY ATPASE"/>
    <property type="match status" value="1"/>
</dbReference>
<dbReference type="PANTHER" id="PTHR23077:SF144">
    <property type="entry name" value="PROTEASOME-ASSOCIATED ATPASE"/>
    <property type="match status" value="1"/>
</dbReference>
<dbReference type="Pfam" id="PF00004">
    <property type="entry name" value="AAA"/>
    <property type="match status" value="1"/>
</dbReference>
<dbReference type="Pfam" id="PF16450">
    <property type="entry name" value="Prot_ATP_ID_OB_C"/>
    <property type="match status" value="1"/>
</dbReference>
<dbReference type="Pfam" id="PF17758">
    <property type="entry name" value="Prot_ATP_ID_OB_N"/>
    <property type="match status" value="1"/>
</dbReference>
<dbReference type="SMART" id="SM00382">
    <property type="entry name" value="AAA"/>
    <property type="match status" value="1"/>
</dbReference>
<dbReference type="SUPFAM" id="SSF52540">
    <property type="entry name" value="P-loop containing nucleoside triphosphate hydrolases"/>
    <property type="match status" value="1"/>
</dbReference>
<dbReference type="PROSITE" id="PS00674">
    <property type="entry name" value="AAA"/>
    <property type="match status" value="1"/>
</dbReference>
<evidence type="ECO:0000255" key="1">
    <source>
        <dbReference type="HAMAP-Rule" id="MF_02112"/>
    </source>
</evidence>
<keyword id="KW-0067">ATP-binding</keyword>
<keyword id="KW-0175">Coiled coil</keyword>
<keyword id="KW-0547">Nucleotide-binding</keyword>
<keyword id="KW-1185">Reference proteome</keyword>
<organism>
    <name type="scientific">Corynebacterium diphtheriae (strain ATCC 700971 / NCTC 13129 / Biotype gravis)</name>
    <dbReference type="NCBI Taxonomy" id="257309"/>
    <lineage>
        <taxon>Bacteria</taxon>
        <taxon>Bacillati</taxon>
        <taxon>Actinomycetota</taxon>
        <taxon>Actinomycetes</taxon>
        <taxon>Mycobacteriales</taxon>
        <taxon>Corynebacteriaceae</taxon>
        <taxon>Corynebacterium</taxon>
    </lineage>
</organism>
<comment type="subunit">
    <text evidence="1">Homohexamer. Assembles into a hexameric ring structure.</text>
</comment>
<comment type="similarity">
    <text evidence="1">Belongs to the AAA ATPase family.</text>
</comment>
<sequence length="509" mass="55668">MLTSDPSESTAHLQRTISNLSARNAKLAELLKASRDKLSILQDQLEDLAAPPSTYGTFLEFSGGRETAEVFTAGRHMRLRISPDVEKAELVPGVQVRLGEASQVVEVCDISTTGQLATLVELLADNRGLICDHTGEERVVKLAAALTEGVDKLPKAGDTLLVDPRAGYAFEVIPKTEVSTLALEEVPDVTYADIGGLNSQIELIHDAVELPFTQPDLYRAYDLKPPKGVLLYGPPGCGKTLIAKAVANSLAQRIGAGNRSYFINVKGPELLNKYVGETERRIRLIFERARELAEEGRPVIVFFDEMESIFRTRGSGVSSDMETTVVPQLLTELDGVESLSNVIIIGATNREELIDPAILRPGRLDVKIRVERPDKQAARDVFARHLKQNIPTAEPIDSLINNAVDHLYADNPYVELSLIDGSTEILHYRDFVSGAMIANIVDRAKKCAIKDHIAGRHSGVASEHLIAAINAENHESEDLPNTSNPDDWSRIIGRHGLRVAHARVLGGQR</sequence>
<reference key="1">
    <citation type="journal article" date="2003" name="Nucleic Acids Res.">
        <title>The complete genome sequence and analysis of Corynebacterium diphtheriae NCTC13129.</title>
        <authorList>
            <person name="Cerdeno-Tarraga A.-M."/>
            <person name="Efstratiou A."/>
            <person name="Dover L.G."/>
            <person name="Holden M.T.G."/>
            <person name="Pallen M.J."/>
            <person name="Bentley S.D."/>
            <person name="Besra G.S."/>
            <person name="Churcher C.M."/>
            <person name="James K.D."/>
            <person name="De Zoysa A."/>
            <person name="Chillingworth T."/>
            <person name="Cronin A."/>
            <person name="Dowd L."/>
            <person name="Feltwell T."/>
            <person name="Hamlin N."/>
            <person name="Holroyd S."/>
            <person name="Jagels K."/>
            <person name="Moule S."/>
            <person name="Quail M.A."/>
            <person name="Rabbinowitsch E."/>
            <person name="Rutherford K.M."/>
            <person name="Thomson N.R."/>
            <person name="Unwin L."/>
            <person name="Whitehead S."/>
            <person name="Barrell B.G."/>
            <person name="Parkhill J."/>
        </authorList>
    </citation>
    <scope>NUCLEOTIDE SEQUENCE [LARGE SCALE GENOMIC DNA]</scope>
    <source>
        <strain>ATCC 700971 / NCTC 13129 / Biotype gravis</strain>
    </source>
</reference>
<proteinExistence type="inferred from homology"/>
<gene>
    <name evidence="1" type="primary">arc</name>
    <name type="ordered locus">DIP1248</name>
</gene>
<accession>Q6NH92</accession>
<feature type="chain" id="PRO_0000396975" description="AAA ATPase forming ring-shaped complexes">
    <location>
        <begin position="1"/>
        <end position="509"/>
    </location>
</feature>
<feature type="coiled-coil region" evidence="1">
    <location>
        <begin position="11"/>
        <end position="50"/>
    </location>
</feature>
<feature type="binding site" evidence="1">
    <location>
        <begin position="236"/>
        <end position="241"/>
    </location>
    <ligand>
        <name>ATP</name>
        <dbReference type="ChEBI" id="CHEBI:30616"/>
    </ligand>
</feature>
<protein>
    <recommendedName>
        <fullName evidence="1">AAA ATPase forming ring-shaped complexes</fullName>
        <shortName evidence="1">ARC</shortName>
    </recommendedName>
</protein>
<name>ARC_CORDI</name>